<gene>
    <name type="primary">yfkF</name>
    <name type="ordered locus">BSU07910</name>
</gene>
<accession>O34929</accession>
<accession>Q79EY1</accession>
<reference key="1">
    <citation type="journal article" date="1996" name="Microbiology">
        <title>Cloning and sequencing of a 40.6 kb segment in the 73 degrees-76 degrees region of the Bacillus subtilis chromosome containing genes for trehalose metabolism and acetoin utilization.</title>
        <authorList>
            <person name="Yamamoto H."/>
            <person name="Uchiyama S."/>
            <person name="Sekiguchi J."/>
        </authorList>
    </citation>
    <scope>NUCLEOTIDE SEQUENCE [GENOMIC DNA]</scope>
    <source>
        <strain>168 / AC327</strain>
    </source>
</reference>
<reference key="2">
    <citation type="journal article" date="1997" name="Nature">
        <title>The complete genome sequence of the Gram-positive bacterium Bacillus subtilis.</title>
        <authorList>
            <person name="Kunst F."/>
            <person name="Ogasawara N."/>
            <person name="Moszer I."/>
            <person name="Albertini A.M."/>
            <person name="Alloni G."/>
            <person name="Azevedo V."/>
            <person name="Bertero M.G."/>
            <person name="Bessieres P."/>
            <person name="Bolotin A."/>
            <person name="Borchert S."/>
            <person name="Borriss R."/>
            <person name="Boursier L."/>
            <person name="Brans A."/>
            <person name="Braun M."/>
            <person name="Brignell S.C."/>
            <person name="Bron S."/>
            <person name="Brouillet S."/>
            <person name="Bruschi C.V."/>
            <person name="Caldwell B."/>
            <person name="Capuano V."/>
            <person name="Carter N.M."/>
            <person name="Choi S.-K."/>
            <person name="Codani J.-J."/>
            <person name="Connerton I.F."/>
            <person name="Cummings N.J."/>
            <person name="Daniel R.A."/>
            <person name="Denizot F."/>
            <person name="Devine K.M."/>
            <person name="Duesterhoeft A."/>
            <person name="Ehrlich S.D."/>
            <person name="Emmerson P.T."/>
            <person name="Entian K.-D."/>
            <person name="Errington J."/>
            <person name="Fabret C."/>
            <person name="Ferrari E."/>
            <person name="Foulger D."/>
            <person name="Fritz C."/>
            <person name="Fujita M."/>
            <person name="Fujita Y."/>
            <person name="Fuma S."/>
            <person name="Galizzi A."/>
            <person name="Galleron N."/>
            <person name="Ghim S.-Y."/>
            <person name="Glaser P."/>
            <person name="Goffeau A."/>
            <person name="Golightly E.J."/>
            <person name="Grandi G."/>
            <person name="Guiseppi G."/>
            <person name="Guy B.J."/>
            <person name="Haga K."/>
            <person name="Haiech J."/>
            <person name="Harwood C.R."/>
            <person name="Henaut A."/>
            <person name="Hilbert H."/>
            <person name="Holsappel S."/>
            <person name="Hosono S."/>
            <person name="Hullo M.-F."/>
            <person name="Itaya M."/>
            <person name="Jones L.-M."/>
            <person name="Joris B."/>
            <person name="Karamata D."/>
            <person name="Kasahara Y."/>
            <person name="Klaerr-Blanchard M."/>
            <person name="Klein C."/>
            <person name="Kobayashi Y."/>
            <person name="Koetter P."/>
            <person name="Koningstein G."/>
            <person name="Krogh S."/>
            <person name="Kumano M."/>
            <person name="Kurita K."/>
            <person name="Lapidus A."/>
            <person name="Lardinois S."/>
            <person name="Lauber J."/>
            <person name="Lazarevic V."/>
            <person name="Lee S.-M."/>
            <person name="Levine A."/>
            <person name="Liu H."/>
            <person name="Masuda S."/>
            <person name="Mauel C."/>
            <person name="Medigue C."/>
            <person name="Medina N."/>
            <person name="Mellado R.P."/>
            <person name="Mizuno M."/>
            <person name="Moestl D."/>
            <person name="Nakai S."/>
            <person name="Noback M."/>
            <person name="Noone D."/>
            <person name="O'Reilly M."/>
            <person name="Ogawa K."/>
            <person name="Ogiwara A."/>
            <person name="Oudega B."/>
            <person name="Park S.-H."/>
            <person name="Parro V."/>
            <person name="Pohl T.M."/>
            <person name="Portetelle D."/>
            <person name="Porwollik S."/>
            <person name="Prescott A.M."/>
            <person name="Presecan E."/>
            <person name="Pujic P."/>
            <person name="Purnelle B."/>
            <person name="Rapoport G."/>
            <person name="Rey M."/>
            <person name="Reynolds S."/>
            <person name="Rieger M."/>
            <person name="Rivolta C."/>
            <person name="Rocha E."/>
            <person name="Roche B."/>
            <person name="Rose M."/>
            <person name="Sadaie Y."/>
            <person name="Sato T."/>
            <person name="Scanlan E."/>
            <person name="Schleich S."/>
            <person name="Schroeter R."/>
            <person name="Scoffone F."/>
            <person name="Sekiguchi J."/>
            <person name="Sekowska A."/>
            <person name="Seror S.J."/>
            <person name="Serror P."/>
            <person name="Shin B.-S."/>
            <person name="Soldo B."/>
            <person name="Sorokin A."/>
            <person name="Tacconi E."/>
            <person name="Takagi T."/>
            <person name="Takahashi H."/>
            <person name="Takemaru K."/>
            <person name="Takeuchi M."/>
            <person name="Tamakoshi A."/>
            <person name="Tanaka T."/>
            <person name="Terpstra P."/>
            <person name="Tognoni A."/>
            <person name="Tosato V."/>
            <person name="Uchiyama S."/>
            <person name="Vandenbol M."/>
            <person name="Vannier F."/>
            <person name="Vassarotti A."/>
            <person name="Viari A."/>
            <person name="Wambutt R."/>
            <person name="Wedler E."/>
            <person name="Wedler H."/>
            <person name="Weitzenegger T."/>
            <person name="Winters P."/>
            <person name="Wipat A."/>
            <person name="Yamamoto H."/>
            <person name="Yamane K."/>
            <person name="Yasumoto K."/>
            <person name="Yata K."/>
            <person name="Yoshida K."/>
            <person name="Yoshikawa H.-F."/>
            <person name="Zumstein E."/>
            <person name="Yoshikawa H."/>
            <person name="Danchin A."/>
        </authorList>
    </citation>
    <scope>NUCLEOTIDE SEQUENCE [LARGE SCALE GENOMIC DNA]</scope>
    <source>
        <strain>168</strain>
    </source>
</reference>
<dbReference type="EMBL" id="D83967">
    <property type="protein sequence ID" value="BAA23396.1"/>
    <property type="molecule type" value="Genomic_DNA"/>
</dbReference>
<dbReference type="EMBL" id="AL009126">
    <property type="protein sequence ID" value="CAB12620.1"/>
    <property type="molecule type" value="Genomic_DNA"/>
</dbReference>
<dbReference type="PIR" id="B69808">
    <property type="entry name" value="B69808"/>
</dbReference>
<dbReference type="RefSeq" id="NP_388672.1">
    <property type="nucleotide sequence ID" value="NC_000964.3"/>
</dbReference>
<dbReference type="RefSeq" id="WP_009966795.1">
    <property type="nucleotide sequence ID" value="NZ_OZ025638.1"/>
</dbReference>
<dbReference type="SMR" id="O34929"/>
<dbReference type="FunCoup" id="O34929">
    <property type="interactions" value="22"/>
</dbReference>
<dbReference type="STRING" id="224308.BSU07910"/>
<dbReference type="TCDB" id="2.A.1.26.2">
    <property type="family name" value="the major facilitator superfamily (mfs)"/>
</dbReference>
<dbReference type="PaxDb" id="224308-BSU07910"/>
<dbReference type="EnsemblBacteria" id="CAB12620">
    <property type="protein sequence ID" value="CAB12620"/>
    <property type="gene ID" value="BSU_07910"/>
</dbReference>
<dbReference type="GeneID" id="939190"/>
<dbReference type="KEGG" id="bsu:BSU07910"/>
<dbReference type="PATRIC" id="fig|224308.179.peg.856"/>
<dbReference type="eggNOG" id="COG0477">
    <property type="taxonomic scope" value="Bacteria"/>
</dbReference>
<dbReference type="InParanoid" id="O34929"/>
<dbReference type="OrthoDB" id="478565at2"/>
<dbReference type="PhylomeDB" id="O34929"/>
<dbReference type="BioCyc" id="BSUB:BSU07910-MONOMER"/>
<dbReference type="Proteomes" id="UP000001570">
    <property type="component" value="Chromosome"/>
</dbReference>
<dbReference type="GO" id="GO:0005886">
    <property type="term" value="C:plasma membrane"/>
    <property type="evidence" value="ECO:0000318"/>
    <property type="project" value="GO_Central"/>
</dbReference>
<dbReference type="GO" id="GO:0022857">
    <property type="term" value="F:transmembrane transporter activity"/>
    <property type="evidence" value="ECO:0007669"/>
    <property type="project" value="InterPro"/>
</dbReference>
<dbReference type="CDD" id="cd17477">
    <property type="entry name" value="MFS_YcaD_like"/>
    <property type="match status" value="1"/>
</dbReference>
<dbReference type="FunFam" id="1.20.1250.20:FF:000324">
    <property type="entry name" value="Transporter, MFS superfamily"/>
    <property type="match status" value="1"/>
</dbReference>
<dbReference type="Gene3D" id="1.20.1250.20">
    <property type="entry name" value="MFS general substrate transporter like domains"/>
    <property type="match status" value="1"/>
</dbReference>
<dbReference type="Gene3D" id="1.20.1720.10">
    <property type="entry name" value="Multidrug resistance protein D"/>
    <property type="match status" value="1"/>
</dbReference>
<dbReference type="InterPro" id="IPR011701">
    <property type="entry name" value="MFS"/>
</dbReference>
<dbReference type="InterPro" id="IPR020846">
    <property type="entry name" value="MFS_dom"/>
</dbReference>
<dbReference type="InterPro" id="IPR036259">
    <property type="entry name" value="MFS_trans_sf"/>
</dbReference>
<dbReference type="InterPro" id="IPR047200">
    <property type="entry name" value="MFS_YcaD-like"/>
</dbReference>
<dbReference type="PANTHER" id="PTHR23521">
    <property type="entry name" value="TRANSPORTER MFS SUPERFAMILY"/>
    <property type="match status" value="1"/>
</dbReference>
<dbReference type="PANTHER" id="PTHR23521:SF2">
    <property type="entry name" value="TRANSPORTER MFS SUPERFAMILY"/>
    <property type="match status" value="1"/>
</dbReference>
<dbReference type="Pfam" id="PF07690">
    <property type="entry name" value="MFS_1"/>
    <property type="match status" value="2"/>
</dbReference>
<dbReference type="SUPFAM" id="SSF103473">
    <property type="entry name" value="MFS general substrate transporter"/>
    <property type="match status" value="1"/>
</dbReference>
<dbReference type="PROSITE" id="PS50850">
    <property type="entry name" value="MFS"/>
    <property type="match status" value="1"/>
</dbReference>
<protein>
    <recommendedName>
        <fullName>Uncharacterized MFS-type transporter YfkF</fullName>
    </recommendedName>
</protein>
<proteinExistence type="inferred from homology"/>
<name>YFKF_BACSU</name>
<comment type="subcellular location">
    <subcellularLocation>
        <location evidence="2">Cell membrane</location>
        <topology evidence="2">Multi-pass membrane protein</topology>
    </subcellularLocation>
</comment>
<comment type="similarity">
    <text evidence="2">Belongs to the major facilitator superfamily.</text>
</comment>
<sequence>MSRFHFFILVLLVSISGFSQGMLLPVISIIFETNGESAAINGLHATGLYIGVLLASPFMEAPLRKLGFKPLIVMGGSIVILSLFGFIWLQSVWVWFLLRLFIGIGDHMLHFSTQTWVTSMSSKQNRGRNLSIYGLSFGLGFAAGPFMVPLVKLSPSLPFIVSGCISLFAWLFVFFLQNAYPETSPHETKSDNSFRRFYQAMLFGWVAFMPTFGYGFLETALNGSFPVYALRLGISVDAVAIILPAFAIGSIIFQFPLGILSDKYGRRNVLLVILLTGALCFFIAGVFPSPYVIGGCFFIAGMAVGSTFTLGISYMTDLLPPHLLPAGNLLCGITFSLGSILGPVAGGWYMQTFESANLFYFITLTLSSVWLALVLGKPKSWSPAETYSSSS</sequence>
<feature type="chain" id="PRO_0000351507" description="Uncharacterized MFS-type transporter YfkF">
    <location>
        <begin position="1"/>
        <end position="391"/>
    </location>
</feature>
<feature type="transmembrane region" description="Helical" evidence="1">
    <location>
        <begin position="7"/>
        <end position="27"/>
    </location>
</feature>
<feature type="transmembrane region" description="Helical" evidence="1">
    <location>
        <begin position="39"/>
        <end position="59"/>
    </location>
</feature>
<feature type="transmembrane region" description="Helical" evidence="1">
    <location>
        <begin position="66"/>
        <end position="88"/>
    </location>
</feature>
<feature type="transmembrane region" description="Helical" evidence="1">
    <location>
        <begin position="92"/>
        <end position="111"/>
    </location>
</feature>
<feature type="transmembrane region" description="Helical" evidence="1">
    <location>
        <begin position="131"/>
        <end position="151"/>
    </location>
</feature>
<feature type="transmembrane region" description="Helical" evidence="1">
    <location>
        <begin position="156"/>
        <end position="176"/>
    </location>
</feature>
<feature type="transmembrane region" description="Helical" evidence="1">
    <location>
        <begin position="197"/>
        <end position="217"/>
    </location>
</feature>
<feature type="transmembrane region" description="Helical" evidence="1">
    <location>
        <begin position="239"/>
        <end position="259"/>
    </location>
</feature>
<feature type="transmembrane region" description="Helical" evidence="1">
    <location>
        <begin position="269"/>
        <end position="289"/>
    </location>
</feature>
<feature type="transmembrane region" description="Helical" evidence="1">
    <location>
        <begin position="292"/>
        <end position="312"/>
    </location>
</feature>
<feature type="transmembrane region" description="Helical" evidence="1">
    <location>
        <begin position="329"/>
        <end position="349"/>
    </location>
</feature>
<feature type="transmembrane region" description="Helical" evidence="1">
    <location>
        <begin position="356"/>
        <end position="376"/>
    </location>
</feature>
<keyword id="KW-1003">Cell membrane</keyword>
<keyword id="KW-0472">Membrane</keyword>
<keyword id="KW-1185">Reference proteome</keyword>
<keyword id="KW-0812">Transmembrane</keyword>
<keyword id="KW-1133">Transmembrane helix</keyword>
<keyword id="KW-0813">Transport</keyword>
<evidence type="ECO:0000255" key="1"/>
<evidence type="ECO:0000305" key="2"/>
<organism>
    <name type="scientific">Bacillus subtilis (strain 168)</name>
    <dbReference type="NCBI Taxonomy" id="224308"/>
    <lineage>
        <taxon>Bacteria</taxon>
        <taxon>Bacillati</taxon>
        <taxon>Bacillota</taxon>
        <taxon>Bacilli</taxon>
        <taxon>Bacillales</taxon>
        <taxon>Bacillaceae</taxon>
        <taxon>Bacillus</taxon>
    </lineage>
</organism>